<sequence length="129" mass="14085">MGKAKAPRQLKDNEAKAVARTLRVSPQKLNLVASMIRGKKVNAALADLTFSRKRIAGTVKKTLESAIANAENNHDLDVDALIVAEAYVGKSIVMKRFHVRGRGRASRIEKPFSHLTIVVREVAEKGEAA</sequence>
<keyword id="KW-0687">Ribonucleoprotein</keyword>
<keyword id="KW-0689">Ribosomal protein</keyword>
<keyword id="KW-0694">RNA-binding</keyword>
<keyword id="KW-0699">rRNA-binding</keyword>
<reference key="1">
    <citation type="journal article" date="2006" name="BMC Microbiol.">
        <title>Intrinsic and selected resistance to antibiotics binding the ribosome: analyses of Brucella 23S rrn, L4, L22, EF-Tu1, EF-Tu2, efflux and phylogenetic implications.</title>
        <authorList>
            <person name="Halling S.M."/>
            <person name="Jensen A.E."/>
        </authorList>
    </citation>
    <scope>NUCLEOTIDE SEQUENCE [GENOMIC DNA]</scope>
    <source>
        <strain>1330</strain>
    </source>
</reference>
<reference key="2">
    <citation type="journal article" date="2002" name="Proc. Natl. Acad. Sci. U.S.A.">
        <title>The Brucella suis genome reveals fundamental similarities between animal and plant pathogens and symbionts.</title>
        <authorList>
            <person name="Paulsen I.T."/>
            <person name="Seshadri R."/>
            <person name="Nelson K.E."/>
            <person name="Eisen J.A."/>
            <person name="Heidelberg J.F."/>
            <person name="Read T.D."/>
            <person name="Dodson R.J."/>
            <person name="Umayam L.A."/>
            <person name="Brinkac L.M."/>
            <person name="Beanan M.J."/>
            <person name="Daugherty S.C."/>
            <person name="DeBoy R.T."/>
            <person name="Durkin A.S."/>
            <person name="Kolonay J.F."/>
            <person name="Madupu R."/>
            <person name="Nelson W.C."/>
            <person name="Ayodeji B."/>
            <person name="Kraul M."/>
            <person name="Shetty J."/>
            <person name="Malek J.A."/>
            <person name="Van Aken S.E."/>
            <person name="Riedmuller S."/>
            <person name="Tettelin H."/>
            <person name="Gill S.R."/>
            <person name="White O."/>
            <person name="Salzberg S.L."/>
            <person name="Hoover D.L."/>
            <person name="Lindler L.E."/>
            <person name="Halling S.M."/>
            <person name="Boyle S.M."/>
            <person name="Fraser C.M."/>
        </authorList>
    </citation>
    <scope>NUCLEOTIDE SEQUENCE [LARGE SCALE GENOMIC DNA]</scope>
    <source>
        <strain>1330</strain>
    </source>
</reference>
<reference key="3">
    <citation type="journal article" date="2011" name="J. Bacteriol.">
        <title>Revised genome sequence of Brucella suis 1330.</title>
        <authorList>
            <person name="Tae H."/>
            <person name="Shallom S."/>
            <person name="Settlage R."/>
            <person name="Preston D."/>
            <person name="Adams L.G."/>
            <person name="Garner H.R."/>
        </authorList>
    </citation>
    <scope>NUCLEOTIDE SEQUENCE [LARGE SCALE GENOMIC DNA]</scope>
    <source>
        <strain>1330</strain>
    </source>
</reference>
<accession>Q8G080</accession>
<accession>Q075T9</accession>
<proteinExistence type="inferred from homology"/>
<gene>
    <name evidence="1" type="primary">rplV</name>
    <name type="ordered locus">BR1228</name>
    <name type="ordered locus">BS1330_I1224</name>
</gene>
<comment type="function">
    <text evidence="1">This protein binds specifically to 23S rRNA; its binding is stimulated by other ribosomal proteins, e.g. L4, L17, and L20. It is important during the early stages of 50S assembly. It makes multiple contacts with different domains of the 23S rRNA in the assembled 50S subunit and ribosome (By similarity).</text>
</comment>
<comment type="function">
    <text evidence="1">The globular domain of the protein is located near the polypeptide exit tunnel on the outside of the subunit, while an extended beta-hairpin is found that lines the wall of the exit tunnel in the center of the 70S ribosome.</text>
</comment>
<comment type="subunit">
    <text evidence="1">Part of the 50S ribosomal subunit.</text>
</comment>
<comment type="similarity">
    <text evidence="1">Belongs to the universal ribosomal protein uL22 family.</text>
</comment>
<name>RL22_BRUSU</name>
<dbReference type="EMBL" id="DQ227914">
    <property type="protein sequence ID" value="ABB77394.1"/>
    <property type="molecule type" value="Genomic_DNA"/>
</dbReference>
<dbReference type="EMBL" id="AE014291">
    <property type="protein sequence ID" value="AAN30147.1"/>
    <property type="molecule type" value="Genomic_DNA"/>
</dbReference>
<dbReference type="EMBL" id="CP002997">
    <property type="protein sequence ID" value="AEM18565.1"/>
    <property type="molecule type" value="Genomic_DNA"/>
</dbReference>
<dbReference type="RefSeq" id="WP_004689764.1">
    <property type="nucleotide sequence ID" value="NZ_KN046804.1"/>
</dbReference>
<dbReference type="SMR" id="Q8G080"/>
<dbReference type="GeneID" id="97533529"/>
<dbReference type="KEGG" id="bms:BR1228"/>
<dbReference type="KEGG" id="bsi:BS1330_I1224"/>
<dbReference type="PATRIC" id="fig|204722.21.peg.2248"/>
<dbReference type="HOGENOM" id="CLU_083987_3_0_5"/>
<dbReference type="PhylomeDB" id="Q8G080"/>
<dbReference type="Proteomes" id="UP000007104">
    <property type="component" value="Chromosome I"/>
</dbReference>
<dbReference type="GO" id="GO:0022625">
    <property type="term" value="C:cytosolic large ribosomal subunit"/>
    <property type="evidence" value="ECO:0007669"/>
    <property type="project" value="TreeGrafter"/>
</dbReference>
<dbReference type="GO" id="GO:0019843">
    <property type="term" value="F:rRNA binding"/>
    <property type="evidence" value="ECO:0007669"/>
    <property type="project" value="UniProtKB-UniRule"/>
</dbReference>
<dbReference type="GO" id="GO:0003735">
    <property type="term" value="F:structural constituent of ribosome"/>
    <property type="evidence" value="ECO:0007669"/>
    <property type="project" value="InterPro"/>
</dbReference>
<dbReference type="GO" id="GO:0006412">
    <property type="term" value="P:translation"/>
    <property type="evidence" value="ECO:0007669"/>
    <property type="project" value="UniProtKB-UniRule"/>
</dbReference>
<dbReference type="CDD" id="cd00336">
    <property type="entry name" value="Ribosomal_L22"/>
    <property type="match status" value="1"/>
</dbReference>
<dbReference type="Gene3D" id="3.90.470.10">
    <property type="entry name" value="Ribosomal protein L22/L17"/>
    <property type="match status" value="1"/>
</dbReference>
<dbReference type="HAMAP" id="MF_01331_B">
    <property type="entry name" value="Ribosomal_uL22_B"/>
    <property type="match status" value="1"/>
</dbReference>
<dbReference type="InterPro" id="IPR001063">
    <property type="entry name" value="Ribosomal_uL22"/>
</dbReference>
<dbReference type="InterPro" id="IPR005727">
    <property type="entry name" value="Ribosomal_uL22_bac/chlpt-type"/>
</dbReference>
<dbReference type="InterPro" id="IPR047867">
    <property type="entry name" value="Ribosomal_uL22_bac/org-type"/>
</dbReference>
<dbReference type="InterPro" id="IPR018260">
    <property type="entry name" value="Ribosomal_uL22_CS"/>
</dbReference>
<dbReference type="InterPro" id="IPR036394">
    <property type="entry name" value="Ribosomal_uL22_sf"/>
</dbReference>
<dbReference type="NCBIfam" id="TIGR01044">
    <property type="entry name" value="rplV_bact"/>
    <property type="match status" value="1"/>
</dbReference>
<dbReference type="PANTHER" id="PTHR13501">
    <property type="entry name" value="CHLOROPLAST 50S RIBOSOMAL PROTEIN L22-RELATED"/>
    <property type="match status" value="1"/>
</dbReference>
<dbReference type="PANTHER" id="PTHR13501:SF8">
    <property type="entry name" value="LARGE RIBOSOMAL SUBUNIT PROTEIN UL22M"/>
    <property type="match status" value="1"/>
</dbReference>
<dbReference type="Pfam" id="PF00237">
    <property type="entry name" value="Ribosomal_L22"/>
    <property type="match status" value="1"/>
</dbReference>
<dbReference type="SUPFAM" id="SSF54843">
    <property type="entry name" value="Ribosomal protein L22"/>
    <property type="match status" value="1"/>
</dbReference>
<dbReference type="PROSITE" id="PS00464">
    <property type="entry name" value="RIBOSOMAL_L22"/>
    <property type="match status" value="1"/>
</dbReference>
<evidence type="ECO:0000255" key="1">
    <source>
        <dbReference type="HAMAP-Rule" id="MF_01331"/>
    </source>
</evidence>
<evidence type="ECO:0000305" key="2"/>
<protein>
    <recommendedName>
        <fullName evidence="1">Large ribosomal subunit protein uL22</fullName>
    </recommendedName>
    <alternativeName>
        <fullName evidence="2">50S ribosomal protein L22</fullName>
    </alternativeName>
</protein>
<feature type="chain" id="PRO_0000125129" description="Large ribosomal subunit protein uL22">
    <location>
        <begin position="1"/>
        <end position="129"/>
    </location>
</feature>
<organism>
    <name type="scientific">Brucella suis biovar 1 (strain 1330)</name>
    <dbReference type="NCBI Taxonomy" id="204722"/>
    <lineage>
        <taxon>Bacteria</taxon>
        <taxon>Pseudomonadati</taxon>
        <taxon>Pseudomonadota</taxon>
        <taxon>Alphaproteobacteria</taxon>
        <taxon>Hyphomicrobiales</taxon>
        <taxon>Brucellaceae</taxon>
        <taxon>Brucella/Ochrobactrum group</taxon>
        <taxon>Brucella</taxon>
    </lineage>
</organism>